<feature type="chain" id="PRO_0000114963" description="Transcription factor PDR8">
    <location>
        <begin position="1"/>
        <end position="701"/>
    </location>
</feature>
<feature type="DNA-binding region" description="Zn(2)-C6 fungal-type" evidence="1">
    <location>
        <begin position="31"/>
        <end position="59"/>
    </location>
</feature>
<feature type="region of interest" description="Disordered" evidence="2">
    <location>
        <begin position="1"/>
        <end position="22"/>
    </location>
</feature>
<evidence type="ECO:0000255" key="1">
    <source>
        <dbReference type="PROSITE-ProRule" id="PRU00227"/>
    </source>
</evidence>
<evidence type="ECO:0000256" key="2">
    <source>
        <dbReference type="SAM" id="MobiDB-lite"/>
    </source>
</evidence>
<evidence type="ECO:0000269" key="3">
    <source>
    </source>
</evidence>
<evidence type="ECO:0000269" key="4">
    <source>
    </source>
</evidence>
<sequence>MDGSHFPMKSTTGEPVSSGKKGKRRKVIKSCAFCRKRKLKCSQARPMCQQCVIRKLPQCVYTEEFNYPLSNTELFEQVPNVALVQKIENLQTLLKENDNNNAKPVYCRSSENPLRSLRTSVLGDNGSRYVFGPTSWKTLSLFEQNKFQTEFQNLWKVLKPLPECTKSQLNENDVVADLPSFPQMESCIKSFFAGPLFGILHIFNQDDILSLLDRLFIRDTTDKNLVILLDLQGNAKDKYNLGIVLQILCLGYYNQDIPSSVSHFLHTLSAASLSSSSSNFVEKLQFFLLSYISVMINCTDGVWDATQGVDLINELCQGCISLGLNDIDKWYLNESEETKQNLRCIWFWALFLDVSTSYDIGNPPSISDDLLDLSIFTAQNFQSPSIDFRRVKLMHDFLDVSRFTTREIHKREMNEKLTTFSLRLIEFIQSNFSPIEHYTNSVYYSDIDPFDILILSRSLSIVASIYNIEMIIAQQSRIIDKNRMVQFLLISISVCVNTMVFHFKEPINDQENVLTEGLKLSIILINPLLIRIVSQVYSLAFNRLIFREKAFLFLIDLDTGKKIQFIKYEEENFDELLTGFDVRTDKFLSFSGTIIRFYEIIDSIFAVNERNKRLLKAVSNFYQLTSTLAFERVSRVLFDKASQARIETEKIWLKKGINMEHFSDLMIEDFINDVWKTFKEISKDLWSIDKKKFYKQYHFDL</sequence>
<keyword id="KW-0010">Activator</keyword>
<keyword id="KW-0963">Cytoplasm</keyword>
<keyword id="KW-0238">DNA-binding</keyword>
<keyword id="KW-0479">Metal-binding</keyword>
<keyword id="KW-0539">Nucleus</keyword>
<keyword id="KW-1185">Reference proteome</keyword>
<keyword id="KW-0804">Transcription</keyword>
<keyword id="KW-0805">Transcription regulation</keyword>
<keyword id="KW-0862">Zinc</keyword>
<name>PDR8_YEAST</name>
<dbReference type="EMBL" id="U17244">
    <property type="protein sequence ID" value="AAB67383.1"/>
    <property type="molecule type" value="Genomic_DNA"/>
</dbReference>
<dbReference type="EMBL" id="BK006945">
    <property type="protein sequence ID" value="DAA09580.1"/>
    <property type="molecule type" value="Genomic_DNA"/>
</dbReference>
<dbReference type="PIR" id="S51403">
    <property type="entry name" value="S51403"/>
</dbReference>
<dbReference type="RefSeq" id="NP_013368.1">
    <property type="nucleotide sequence ID" value="NM_001182153.1"/>
</dbReference>
<dbReference type="BioGRID" id="31534">
    <property type="interactions" value="119"/>
</dbReference>
<dbReference type="DIP" id="DIP-1571N"/>
<dbReference type="FunCoup" id="Q06149">
    <property type="interactions" value="136"/>
</dbReference>
<dbReference type="IntAct" id="Q06149">
    <property type="interactions" value="4"/>
</dbReference>
<dbReference type="MINT" id="Q06149"/>
<dbReference type="STRING" id="4932.YLR266C"/>
<dbReference type="iPTMnet" id="Q06149"/>
<dbReference type="PaxDb" id="4932-YLR266C"/>
<dbReference type="PeptideAtlas" id="Q06149"/>
<dbReference type="EnsemblFungi" id="YLR266C_mRNA">
    <property type="protein sequence ID" value="YLR266C"/>
    <property type="gene ID" value="YLR266C"/>
</dbReference>
<dbReference type="GeneID" id="850971"/>
<dbReference type="KEGG" id="sce:YLR266C"/>
<dbReference type="AGR" id="SGD:S000004256"/>
<dbReference type="SGD" id="S000004256">
    <property type="gene designation" value="PDR8"/>
</dbReference>
<dbReference type="VEuPathDB" id="FungiDB:YLR266C"/>
<dbReference type="eggNOG" id="ENOG502R710">
    <property type="taxonomic scope" value="Eukaryota"/>
</dbReference>
<dbReference type="HOGENOM" id="CLU_010594_1_0_1"/>
<dbReference type="InParanoid" id="Q06149"/>
<dbReference type="OMA" id="WYLNESE"/>
<dbReference type="OrthoDB" id="10261408at2759"/>
<dbReference type="BioCyc" id="YEAST:G3O-32366-MONOMER"/>
<dbReference type="BioGRID-ORCS" id="850971">
    <property type="hits" value="0 hits in 13 CRISPR screens"/>
</dbReference>
<dbReference type="PRO" id="PR:Q06149"/>
<dbReference type="Proteomes" id="UP000002311">
    <property type="component" value="Chromosome XII"/>
</dbReference>
<dbReference type="RNAct" id="Q06149">
    <property type="molecule type" value="protein"/>
</dbReference>
<dbReference type="GO" id="GO:0005737">
    <property type="term" value="C:cytoplasm"/>
    <property type="evidence" value="ECO:0007669"/>
    <property type="project" value="UniProtKB-SubCell"/>
</dbReference>
<dbReference type="GO" id="GO:0005634">
    <property type="term" value="C:nucleus"/>
    <property type="evidence" value="ECO:0000314"/>
    <property type="project" value="SGD"/>
</dbReference>
<dbReference type="GO" id="GO:0000981">
    <property type="term" value="F:DNA-binding transcription factor activity, RNA polymerase II-specific"/>
    <property type="evidence" value="ECO:0000247"/>
    <property type="project" value="SGD"/>
</dbReference>
<dbReference type="GO" id="GO:0000978">
    <property type="term" value="F:RNA polymerase II cis-regulatory region sequence-specific DNA binding"/>
    <property type="evidence" value="ECO:0000314"/>
    <property type="project" value="SGD"/>
</dbReference>
<dbReference type="GO" id="GO:0008270">
    <property type="term" value="F:zinc ion binding"/>
    <property type="evidence" value="ECO:0007669"/>
    <property type="project" value="InterPro"/>
</dbReference>
<dbReference type="GO" id="GO:0033554">
    <property type="term" value="P:cellular response to stress"/>
    <property type="evidence" value="ECO:0000315"/>
    <property type="project" value="SGD"/>
</dbReference>
<dbReference type="GO" id="GO:0006351">
    <property type="term" value="P:DNA-templated transcription"/>
    <property type="evidence" value="ECO:0007669"/>
    <property type="project" value="InterPro"/>
</dbReference>
<dbReference type="GO" id="GO:0045944">
    <property type="term" value="P:positive regulation of transcription by RNA polymerase II"/>
    <property type="evidence" value="ECO:0000315"/>
    <property type="project" value="SGD"/>
</dbReference>
<dbReference type="CDD" id="cd12148">
    <property type="entry name" value="fungal_TF_MHR"/>
    <property type="match status" value="1"/>
</dbReference>
<dbReference type="CDD" id="cd00067">
    <property type="entry name" value="GAL4"/>
    <property type="match status" value="1"/>
</dbReference>
<dbReference type="Gene3D" id="4.10.240.10">
    <property type="entry name" value="Zn(2)-C6 fungal-type DNA-binding domain"/>
    <property type="match status" value="1"/>
</dbReference>
<dbReference type="InterPro" id="IPR007219">
    <property type="entry name" value="Transcription_factor_dom_fun"/>
</dbReference>
<dbReference type="InterPro" id="IPR052693">
    <property type="entry name" value="Yeast_MDR_Regulatory"/>
</dbReference>
<dbReference type="InterPro" id="IPR036864">
    <property type="entry name" value="Zn2-C6_fun-type_DNA-bd_sf"/>
</dbReference>
<dbReference type="InterPro" id="IPR001138">
    <property type="entry name" value="Zn2Cys6_DnaBD"/>
</dbReference>
<dbReference type="PANTHER" id="PTHR31405">
    <property type="entry name" value="TRANSCRIPTION FACTOR PDR8-RELATED"/>
    <property type="match status" value="1"/>
</dbReference>
<dbReference type="PANTHER" id="PTHR31405:SF8">
    <property type="entry name" value="TRANSCRIPTION FACTOR PDR8-RELATED"/>
    <property type="match status" value="1"/>
</dbReference>
<dbReference type="Pfam" id="PF04082">
    <property type="entry name" value="Fungal_trans"/>
    <property type="match status" value="1"/>
</dbReference>
<dbReference type="Pfam" id="PF00172">
    <property type="entry name" value="Zn_clus"/>
    <property type="match status" value="1"/>
</dbReference>
<dbReference type="SMART" id="SM00066">
    <property type="entry name" value="GAL4"/>
    <property type="match status" value="1"/>
</dbReference>
<dbReference type="SUPFAM" id="SSF57701">
    <property type="entry name" value="Zn2/Cys6 DNA-binding domain"/>
    <property type="match status" value="1"/>
</dbReference>
<dbReference type="PROSITE" id="PS00463">
    <property type="entry name" value="ZN2_CY6_FUNGAL_1"/>
    <property type="match status" value="1"/>
</dbReference>
<dbReference type="PROSITE" id="PS50048">
    <property type="entry name" value="ZN2_CY6_FUNGAL_2"/>
    <property type="match status" value="1"/>
</dbReference>
<comment type="function">
    <text evidence="3">Up-regulates the transcription of the genes for ATP-binding cassette (ABC) transporters YOR1 and PDR15, for major facilitator superfamily transporter AZR1, for pleiotropic drug resistance SNG1, for alpha-glucosidase YJL216C and for YLL056C.</text>
</comment>
<comment type="subcellular location">
    <subcellularLocation>
        <location evidence="4">Cytoplasm</location>
    </subcellularLocation>
    <subcellularLocation>
        <location evidence="1 4">Nucleus</location>
    </subcellularLocation>
</comment>
<accession>Q06149</accession>
<accession>D6VYR4</accession>
<reference key="1">
    <citation type="journal article" date="1997" name="Nature">
        <title>The nucleotide sequence of Saccharomyces cerevisiae chromosome XII.</title>
        <authorList>
            <person name="Johnston M."/>
            <person name="Hillier L.W."/>
            <person name="Riles L."/>
            <person name="Albermann K."/>
            <person name="Andre B."/>
            <person name="Ansorge W."/>
            <person name="Benes V."/>
            <person name="Brueckner M."/>
            <person name="Delius H."/>
            <person name="Dubois E."/>
            <person name="Duesterhoeft A."/>
            <person name="Entian K.-D."/>
            <person name="Floeth M."/>
            <person name="Goffeau A."/>
            <person name="Hebling U."/>
            <person name="Heumann K."/>
            <person name="Heuss-Neitzel D."/>
            <person name="Hilbert H."/>
            <person name="Hilger F."/>
            <person name="Kleine K."/>
            <person name="Koetter P."/>
            <person name="Louis E.J."/>
            <person name="Messenguy F."/>
            <person name="Mewes H.-W."/>
            <person name="Miosga T."/>
            <person name="Moestl D."/>
            <person name="Mueller-Auer S."/>
            <person name="Nentwich U."/>
            <person name="Obermaier B."/>
            <person name="Piravandi E."/>
            <person name="Pohl T.M."/>
            <person name="Portetelle D."/>
            <person name="Purnelle B."/>
            <person name="Rechmann S."/>
            <person name="Rieger M."/>
            <person name="Rinke M."/>
            <person name="Rose M."/>
            <person name="Scharfe M."/>
            <person name="Scherens B."/>
            <person name="Scholler P."/>
            <person name="Schwager C."/>
            <person name="Schwarz S."/>
            <person name="Underwood A.P."/>
            <person name="Urrestarazu L.A."/>
            <person name="Vandenbol M."/>
            <person name="Verhasselt P."/>
            <person name="Vierendeels F."/>
            <person name="Voet M."/>
            <person name="Volckaert G."/>
            <person name="Voss H."/>
            <person name="Wambutt R."/>
            <person name="Wedler E."/>
            <person name="Wedler H."/>
            <person name="Zimmermann F.K."/>
            <person name="Zollner A."/>
            <person name="Hani J."/>
            <person name="Hoheisel J.D."/>
        </authorList>
    </citation>
    <scope>NUCLEOTIDE SEQUENCE [LARGE SCALE GENOMIC DNA]</scope>
    <source>
        <strain>ATCC 204508 / S288c</strain>
    </source>
</reference>
<reference key="2">
    <citation type="journal article" date="2014" name="G3 (Bethesda)">
        <title>The reference genome sequence of Saccharomyces cerevisiae: Then and now.</title>
        <authorList>
            <person name="Engel S.R."/>
            <person name="Dietrich F.S."/>
            <person name="Fisk D.G."/>
            <person name="Binkley G."/>
            <person name="Balakrishnan R."/>
            <person name="Costanzo M.C."/>
            <person name="Dwight S.S."/>
            <person name="Hitz B.C."/>
            <person name="Karra K."/>
            <person name="Nash R.S."/>
            <person name="Weng S."/>
            <person name="Wong E.D."/>
            <person name="Lloyd P."/>
            <person name="Skrzypek M.S."/>
            <person name="Miyasato S.R."/>
            <person name="Simison M."/>
            <person name="Cherry J.M."/>
        </authorList>
    </citation>
    <scope>GENOME REANNOTATION</scope>
    <source>
        <strain>ATCC 204508 / S288c</strain>
    </source>
</reference>
<reference key="3">
    <citation type="journal article" date="2003" name="J. Biol. Chem.">
        <title>A general strategy to uncover transcription factor properties identifies a new regulator of drug resistance in yeast.</title>
        <authorList>
            <person name="Hikkel I."/>
            <person name="Lucau-Danila A."/>
            <person name="Delaveau T."/>
            <person name="Marc P."/>
            <person name="Devaux F."/>
            <person name="Jacq C."/>
        </authorList>
    </citation>
    <scope>FUNCTION</scope>
</reference>
<reference key="4">
    <citation type="journal article" date="2003" name="Nature">
        <title>Global analysis of protein localization in budding yeast.</title>
        <authorList>
            <person name="Huh W.-K."/>
            <person name="Falvo J.V."/>
            <person name="Gerke L.C."/>
            <person name="Carroll A.S."/>
            <person name="Howson R.W."/>
            <person name="Weissman J.S."/>
            <person name="O'Shea E.K."/>
        </authorList>
    </citation>
    <scope>SUBCELLULAR LOCATION [LARGE SCALE ANALYSIS]</scope>
</reference>
<protein>
    <recommendedName>
        <fullName>Transcription factor PDR8</fullName>
    </recommendedName>
    <alternativeName>
        <fullName>Pleiotropic drug resistance protein 8</fullName>
    </alternativeName>
</protein>
<proteinExistence type="evidence at protein level"/>
<gene>
    <name type="primary">PDR8</name>
    <name type="ordered locus">YLR266C</name>
    <name type="ORF">L8479.13</name>
</gene>
<organism>
    <name type="scientific">Saccharomyces cerevisiae (strain ATCC 204508 / S288c)</name>
    <name type="common">Baker's yeast</name>
    <dbReference type="NCBI Taxonomy" id="559292"/>
    <lineage>
        <taxon>Eukaryota</taxon>
        <taxon>Fungi</taxon>
        <taxon>Dikarya</taxon>
        <taxon>Ascomycota</taxon>
        <taxon>Saccharomycotina</taxon>
        <taxon>Saccharomycetes</taxon>
        <taxon>Saccharomycetales</taxon>
        <taxon>Saccharomycetaceae</taxon>
        <taxon>Saccharomyces</taxon>
    </lineage>
</organism>